<sequence>MIGHIQGVLTSKQPPEVVLDVQGIGYEIQLPMTCFYQLPPVGETIKLITHFVVREDAQLLYGFISASERSLFRLLLKTQGVGPKLALAILSGMSADEFVMAVNQNDVTRLVKLPGVGKKTAERLVIEMRDRLKDWQPSTPFTDRAPLDSQGMDAREHPADARTDAISALQSLGYKENQAEKALQKVYSAEHNSETLIRLALKQLS</sequence>
<accession>Q5QYU4</accession>
<protein>
    <recommendedName>
        <fullName evidence="1">Holliday junction branch migration complex subunit RuvA</fullName>
    </recommendedName>
</protein>
<evidence type="ECO:0000255" key="1">
    <source>
        <dbReference type="HAMAP-Rule" id="MF_00031"/>
    </source>
</evidence>
<evidence type="ECO:0000256" key="2">
    <source>
        <dbReference type="SAM" id="MobiDB-lite"/>
    </source>
</evidence>
<dbReference type="EMBL" id="AE017340">
    <property type="protein sequence ID" value="AAV81926.1"/>
    <property type="molecule type" value="Genomic_DNA"/>
</dbReference>
<dbReference type="RefSeq" id="WP_011234337.1">
    <property type="nucleotide sequence ID" value="NC_006512.1"/>
</dbReference>
<dbReference type="SMR" id="Q5QYU4"/>
<dbReference type="STRING" id="283942.IL1086"/>
<dbReference type="GeneID" id="41336254"/>
<dbReference type="KEGG" id="ilo:IL1086"/>
<dbReference type="eggNOG" id="COG0632">
    <property type="taxonomic scope" value="Bacteria"/>
</dbReference>
<dbReference type="HOGENOM" id="CLU_087936_0_0_6"/>
<dbReference type="OrthoDB" id="5293449at2"/>
<dbReference type="Proteomes" id="UP000001171">
    <property type="component" value="Chromosome"/>
</dbReference>
<dbReference type="GO" id="GO:0005737">
    <property type="term" value="C:cytoplasm"/>
    <property type="evidence" value="ECO:0007669"/>
    <property type="project" value="UniProtKB-SubCell"/>
</dbReference>
<dbReference type="GO" id="GO:0009379">
    <property type="term" value="C:Holliday junction helicase complex"/>
    <property type="evidence" value="ECO:0007669"/>
    <property type="project" value="InterPro"/>
</dbReference>
<dbReference type="GO" id="GO:0048476">
    <property type="term" value="C:Holliday junction resolvase complex"/>
    <property type="evidence" value="ECO:0007669"/>
    <property type="project" value="UniProtKB-UniRule"/>
</dbReference>
<dbReference type="GO" id="GO:0005524">
    <property type="term" value="F:ATP binding"/>
    <property type="evidence" value="ECO:0007669"/>
    <property type="project" value="InterPro"/>
</dbReference>
<dbReference type="GO" id="GO:0000400">
    <property type="term" value="F:four-way junction DNA binding"/>
    <property type="evidence" value="ECO:0007669"/>
    <property type="project" value="UniProtKB-UniRule"/>
</dbReference>
<dbReference type="GO" id="GO:0009378">
    <property type="term" value="F:four-way junction helicase activity"/>
    <property type="evidence" value="ECO:0007669"/>
    <property type="project" value="InterPro"/>
</dbReference>
<dbReference type="GO" id="GO:0006310">
    <property type="term" value="P:DNA recombination"/>
    <property type="evidence" value="ECO:0007669"/>
    <property type="project" value="UniProtKB-UniRule"/>
</dbReference>
<dbReference type="GO" id="GO:0006281">
    <property type="term" value="P:DNA repair"/>
    <property type="evidence" value="ECO:0007669"/>
    <property type="project" value="UniProtKB-UniRule"/>
</dbReference>
<dbReference type="CDD" id="cd14332">
    <property type="entry name" value="UBA_RuvA_C"/>
    <property type="match status" value="1"/>
</dbReference>
<dbReference type="Gene3D" id="1.10.150.20">
    <property type="entry name" value="5' to 3' exonuclease, C-terminal subdomain"/>
    <property type="match status" value="1"/>
</dbReference>
<dbReference type="Gene3D" id="1.10.8.10">
    <property type="entry name" value="DNA helicase RuvA subunit, C-terminal domain"/>
    <property type="match status" value="1"/>
</dbReference>
<dbReference type="Gene3D" id="2.40.50.140">
    <property type="entry name" value="Nucleic acid-binding proteins"/>
    <property type="match status" value="1"/>
</dbReference>
<dbReference type="HAMAP" id="MF_00031">
    <property type="entry name" value="DNA_HJ_migration_RuvA"/>
    <property type="match status" value="1"/>
</dbReference>
<dbReference type="InterPro" id="IPR013849">
    <property type="entry name" value="DNA_helicase_Holl-junc_RuvA_I"/>
</dbReference>
<dbReference type="InterPro" id="IPR003583">
    <property type="entry name" value="Hlx-hairpin-Hlx_DNA-bd_motif"/>
</dbReference>
<dbReference type="InterPro" id="IPR012340">
    <property type="entry name" value="NA-bd_OB-fold"/>
</dbReference>
<dbReference type="InterPro" id="IPR000085">
    <property type="entry name" value="RuvA"/>
</dbReference>
<dbReference type="InterPro" id="IPR010994">
    <property type="entry name" value="RuvA_2-like"/>
</dbReference>
<dbReference type="InterPro" id="IPR011114">
    <property type="entry name" value="RuvA_C"/>
</dbReference>
<dbReference type="InterPro" id="IPR036267">
    <property type="entry name" value="RuvA_C_sf"/>
</dbReference>
<dbReference type="NCBIfam" id="TIGR00084">
    <property type="entry name" value="ruvA"/>
    <property type="match status" value="1"/>
</dbReference>
<dbReference type="Pfam" id="PF14520">
    <property type="entry name" value="HHH_5"/>
    <property type="match status" value="1"/>
</dbReference>
<dbReference type="Pfam" id="PF07499">
    <property type="entry name" value="RuvA_C"/>
    <property type="match status" value="1"/>
</dbReference>
<dbReference type="Pfam" id="PF01330">
    <property type="entry name" value="RuvA_N"/>
    <property type="match status" value="1"/>
</dbReference>
<dbReference type="SMART" id="SM00278">
    <property type="entry name" value="HhH1"/>
    <property type="match status" value="2"/>
</dbReference>
<dbReference type="SUPFAM" id="SSF46929">
    <property type="entry name" value="DNA helicase RuvA subunit, C-terminal domain"/>
    <property type="match status" value="1"/>
</dbReference>
<dbReference type="SUPFAM" id="SSF50249">
    <property type="entry name" value="Nucleic acid-binding proteins"/>
    <property type="match status" value="1"/>
</dbReference>
<dbReference type="SUPFAM" id="SSF47781">
    <property type="entry name" value="RuvA domain 2-like"/>
    <property type="match status" value="1"/>
</dbReference>
<feature type="chain" id="PRO_0000224873" description="Holliday junction branch migration complex subunit RuvA">
    <location>
        <begin position="1"/>
        <end position="205"/>
    </location>
</feature>
<feature type="region of interest" description="Domain I" evidence="1">
    <location>
        <begin position="1"/>
        <end position="64"/>
    </location>
</feature>
<feature type="region of interest" description="Domain II" evidence="1">
    <location>
        <begin position="65"/>
        <end position="143"/>
    </location>
</feature>
<feature type="region of interest" description="Disordered" evidence="2">
    <location>
        <begin position="136"/>
        <end position="157"/>
    </location>
</feature>
<feature type="region of interest" description="Flexible linker" evidence="1">
    <location>
        <begin position="144"/>
        <end position="156"/>
    </location>
</feature>
<feature type="region of interest" description="Domain III" evidence="1">
    <location>
        <begin position="157"/>
        <end position="205"/>
    </location>
</feature>
<proteinExistence type="inferred from homology"/>
<reference key="1">
    <citation type="journal article" date="2004" name="Proc. Natl. Acad. Sci. U.S.A.">
        <title>Genome sequence of the deep-sea gamma-proteobacterium Idiomarina loihiensis reveals amino acid fermentation as a source of carbon and energy.</title>
        <authorList>
            <person name="Hou S."/>
            <person name="Saw J.H."/>
            <person name="Lee K.S."/>
            <person name="Freitas T.A."/>
            <person name="Belisle C."/>
            <person name="Kawarabayasi Y."/>
            <person name="Donachie S.P."/>
            <person name="Pikina A."/>
            <person name="Galperin M.Y."/>
            <person name="Koonin E.V."/>
            <person name="Makarova K.S."/>
            <person name="Omelchenko M.V."/>
            <person name="Sorokin A."/>
            <person name="Wolf Y.I."/>
            <person name="Li Q.X."/>
            <person name="Keum Y.S."/>
            <person name="Campbell S."/>
            <person name="Denery J."/>
            <person name="Aizawa S."/>
            <person name="Shibata S."/>
            <person name="Malahoff A."/>
            <person name="Alam M."/>
        </authorList>
    </citation>
    <scope>NUCLEOTIDE SEQUENCE [LARGE SCALE GENOMIC DNA]</scope>
    <source>
        <strain>ATCC BAA-735 / DSM 15497 / L2-TR</strain>
    </source>
</reference>
<organism>
    <name type="scientific">Idiomarina loihiensis (strain ATCC BAA-735 / DSM 15497 / L2-TR)</name>
    <dbReference type="NCBI Taxonomy" id="283942"/>
    <lineage>
        <taxon>Bacteria</taxon>
        <taxon>Pseudomonadati</taxon>
        <taxon>Pseudomonadota</taxon>
        <taxon>Gammaproteobacteria</taxon>
        <taxon>Alteromonadales</taxon>
        <taxon>Idiomarinaceae</taxon>
        <taxon>Idiomarina</taxon>
    </lineage>
</organism>
<keyword id="KW-0963">Cytoplasm</keyword>
<keyword id="KW-0227">DNA damage</keyword>
<keyword id="KW-0233">DNA recombination</keyword>
<keyword id="KW-0234">DNA repair</keyword>
<keyword id="KW-0238">DNA-binding</keyword>
<keyword id="KW-1185">Reference proteome</keyword>
<name>RUVA_IDILO</name>
<comment type="function">
    <text evidence="1">The RuvA-RuvB-RuvC complex processes Holliday junction (HJ) DNA during genetic recombination and DNA repair, while the RuvA-RuvB complex plays an important role in the rescue of blocked DNA replication forks via replication fork reversal (RFR). RuvA specifically binds to HJ cruciform DNA, conferring on it an open structure. The RuvB hexamer acts as an ATP-dependent pump, pulling dsDNA into and through the RuvAB complex. HJ branch migration allows RuvC to scan DNA until it finds its consensus sequence, where it cleaves and resolves the cruciform DNA.</text>
</comment>
<comment type="subunit">
    <text evidence="1">Homotetramer. Forms an RuvA(8)-RuvB(12)-Holliday junction (HJ) complex. HJ DNA is sandwiched between 2 RuvA tetramers; dsDNA enters through RuvA and exits via RuvB. An RuvB hexamer assembles on each DNA strand where it exits the tetramer. Each RuvB hexamer is contacted by two RuvA subunits (via domain III) on 2 adjacent RuvB subunits; this complex drives branch migration. In the full resolvosome a probable DNA-RuvA(4)-RuvB(12)-RuvC(2) complex forms which resolves the HJ.</text>
</comment>
<comment type="subcellular location">
    <subcellularLocation>
        <location evidence="1">Cytoplasm</location>
    </subcellularLocation>
</comment>
<comment type="domain">
    <text evidence="1">Has three domains with a flexible linker between the domains II and III and assumes an 'L' shape. Domain III is highly mobile and contacts RuvB.</text>
</comment>
<comment type="similarity">
    <text evidence="1">Belongs to the RuvA family.</text>
</comment>
<gene>
    <name evidence="1" type="primary">ruvA</name>
    <name type="ordered locus">IL1086</name>
</gene>